<evidence type="ECO:0000250" key="1"/>
<evidence type="ECO:0000250" key="2">
    <source>
        <dbReference type="UniProtKB" id="Q5EHP3"/>
    </source>
</evidence>
<evidence type="ECO:0000255" key="3"/>
<evidence type="ECO:0000305" key="4"/>
<evidence type="ECO:0000305" key="5">
    <source>
    </source>
</evidence>
<reference key="1">
    <citation type="journal article" date="2001" name="Mol. Biol. Evol.">
        <title>Mechanisms for evolving hypervariability: the case of conopeptides.</title>
        <authorList>
            <person name="Conticello S.G."/>
            <person name="Gilad Y."/>
            <person name="Avidan N."/>
            <person name="Ben-Asher E."/>
            <person name="Levy Z."/>
            <person name="Fainzilber M."/>
        </authorList>
    </citation>
    <scope>NUCLEOTIDE SEQUENCE [MRNA]</scope>
    <source>
        <tissue>Venom duct</tissue>
    </source>
</reference>
<feature type="signal peptide" evidence="3">
    <location>
        <begin position="1"/>
        <end position="24"/>
    </location>
</feature>
<feature type="propeptide" id="PRO_0000404876" evidence="1">
    <location>
        <begin position="25"/>
        <end position="51"/>
    </location>
</feature>
<feature type="peptide" id="PRO_0000404877" description="Conotoxin ArMLKM-01">
    <location>
        <begin position="54"/>
        <end position="67"/>
    </location>
</feature>
<feature type="disulfide bond" evidence="2">
    <location>
        <begin position="54"/>
        <end position="65"/>
    </location>
</feature>
<feature type="disulfide bond" evidence="2">
    <location>
        <begin position="55"/>
        <end position="63"/>
    </location>
</feature>
<feature type="disulfide bond" evidence="2">
    <location>
        <begin position="58"/>
        <end position="66"/>
    </location>
</feature>
<comment type="subcellular location">
    <subcellularLocation>
        <location evidence="4">Secreted</location>
    </subcellularLocation>
</comment>
<comment type="tissue specificity">
    <text evidence="5">Expressed by the venom duct.</text>
</comment>
<comment type="domain">
    <text evidence="4">The cysteine framework is III (CC-C-C-CC). Classified in the M-1 branch, since 1 residue stands between the fourth and the fifth cysteine residues.</text>
</comment>
<comment type="similarity">
    <text evidence="4">Belongs to the conotoxin M superfamily.</text>
</comment>
<dbReference type="EMBL" id="AF214952">
    <property type="protein sequence ID" value="AAG60380.1"/>
    <property type="molecule type" value="mRNA"/>
</dbReference>
<dbReference type="ConoServer" id="639">
    <property type="toxin name" value="Ar3.1 precursor"/>
</dbReference>
<dbReference type="GO" id="GO:0005576">
    <property type="term" value="C:extracellular region"/>
    <property type="evidence" value="ECO:0007669"/>
    <property type="project" value="UniProtKB-SubCell"/>
</dbReference>
<dbReference type="GO" id="GO:0008200">
    <property type="term" value="F:ion channel inhibitor activity"/>
    <property type="evidence" value="ECO:0007669"/>
    <property type="project" value="InterPro"/>
</dbReference>
<dbReference type="GO" id="GO:0090729">
    <property type="term" value="F:toxin activity"/>
    <property type="evidence" value="ECO:0007669"/>
    <property type="project" value="UniProtKB-KW"/>
</dbReference>
<dbReference type="InterPro" id="IPR004214">
    <property type="entry name" value="Conotoxin"/>
</dbReference>
<dbReference type="Pfam" id="PF02950">
    <property type="entry name" value="Conotoxin"/>
    <property type="match status" value="1"/>
</dbReference>
<proteinExistence type="inferred from homology"/>
<sequence length="67" mass="7770">MLKMEVVLFTFLVLFPLSTLQLETDQPVERYVENKQDLNPDESRNFMLPIVKKCCTACRMPPCKCCA</sequence>
<protein>
    <recommendedName>
        <fullName>Conotoxin ArMLKM-01</fullName>
    </recommendedName>
</protein>
<keyword id="KW-0165">Cleavage on pair of basic residues</keyword>
<keyword id="KW-1015">Disulfide bond</keyword>
<keyword id="KW-0528">Neurotoxin</keyword>
<keyword id="KW-0964">Secreted</keyword>
<keyword id="KW-0732">Signal</keyword>
<keyword id="KW-0800">Toxin</keyword>
<organism>
    <name type="scientific">Conus arenatus</name>
    <name type="common">Sand-dusted cone</name>
    <dbReference type="NCBI Taxonomy" id="89451"/>
    <lineage>
        <taxon>Eukaryota</taxon>
        <taxon>Metazoa</taxon>
        <taxon>Spiralia</taxon>
        <taxon>Lophotrochozoa</taxon>
        <taxon>Mollusca</taxon>
        <taxon>Gastropoda</taxon>
        <taxon>Caenogastropoda</taxon>
        <taxon>Neogastropoda</taxon>
        <taxon>Conoidea</taxon>
        <taxon>Conidae</taxon>
        <taxon>Conus</taxon>
    </lineage>
</organism>
<name>CM31_CONAE</name>
<accession>Q9BPH3</accession>